<reference key="1">
    <citation type="journal article" date="2010" name="Stand. Genomic Sci.">
        <title>Complete genome sequence of Streptosporangium roseum type strain (NI 9100).</title>
        <authorList>
            <person name="Nolan M."/>
            <person name="Sikorski J."/>
            <person name="Jando M."/>
            <person name="Lucas S."/>
            <person name="Lapidus A."/>
            <person name="Glavina Del Rio T."/>
            <person name="Chen F."/>
            <person name="Tice H."/>
            <person name="Pitluck S."/>
            <person name="Cheng J.F."/>
            <person name="Chertkov O."/>
            <person name="Sims D."/>
            <person name="Meincke L."/>
            <person name="Brettin T."/>
            <person name="Han C."/>
            <person name="Detter J.C."/>
            <person name="Bruce D."/>
            <person name="Goodwin L."/>
            <person name="Land M."/>
            <person name="Hauser L."/>
            <person name="Chang Y.J."/>
            <person name="Jeffries C.D."/>
            <person name="Ivanova N."/>
            <person name="Mavromatis K."/>
            <person name="Mikhailova N."/>
            <person name="Chen A."/>
            <person name="Palaniappan K."/>
            <person name="Chain P."/>
            <person name="Rohde M."/>
            <person name="Goker M."/>
            <person name="Bristow J."/>
            <person name="Eisen J.A."/>
            <person name="Markowitz V."/>
            <person name="Hugenholtz P."/>
            <person name="Kyrpides N.C."/>
            <person name="Klenk H.P."/>
        </authorList>
    </citation>
    <scope>NUCLEOTIDE SEQUENCE [LARGE SCALE GENOMIC DNA]</scope>
    <source>
        <strain>ATCC 12428 / DSM 43021 / JCM 3005 / KCTC 9067 / NCIMB 10171 / NRRL 2505 / NI 9100</strain>
    </source>
</reference>
<organism>
    <name type="scientific">Streptosporangium roseum (strain ATCC 12428 / DSM 43021 / JCM 3005 / KCTC 9067 / NCIMB 10171 / NRRL 2505 / NI 9100)</name>
    <dbReference type="NCBI Taxonomy" id="479432"/>
    <lineage>
        <taxon>Bacteria</taxon>
        <taxon>Bacillati</taxon>
        <taxon>Actinomycetota</taxon>
        <taxon>Actinomycetes</taxon>
        <taxon>Streptosporangiales</taxon>
        <taxon>Streptosporangiaceae</taxon>
        <taxon>Streptosporangium</taxon>
    </lineage>
</organism>
<accession>D2ATX1</accession>
<proteinExistence type="inferred from homology"/>
<gene>
    <name evidence="1" type="primary">arc</name>
    <name type="ordered locus">Sros_5891</name>
</gene>
<comment type="function">
    <text evidence="1">ATPase which is responsible for recognizing, binding, unfolding and translocation of pupylated proteins into the bacterial 20S proteasome core particle. May be essential for opening the gate of the 20S proteasome via an interaction with its C-terminus, thereby allowing substrate entry and access to the site of proteolysis. Thus, the C-termini of the proteasomal ATPase may function like a 'key in a lock' to induce gate opening and therefore regulate proteolysis.</text>
</comment>
<comment type="pathway">
    <text evidence="1">Protein degradation; proteasomal Pup-dependent pathway.</text>
</comment>
<comment type="subunit">
    <text evidence="1">Homohexamer. Assembles into a hexameric ring structure that caps the 20S proteasome core. Strongly interacts with the prokaryotic ubiquitin-like protein Pup through a hydrophobic interface; the interacting region of ARC lies in its N-terminal coiled-coil domain. There is one Pup binding site per ARC hexamer ring. Upon ATP-binding, the C-terminus of ARC interacts with the alpha-rings of the proteasome core, possibly by binding to the intersubunit pockets.</text>
</comment>
<comment type="domain">
    <text evidence="1">Consists of three main regions, an N-terminal coiled-coil domain that binds to protein Pup and functions as a docking station, an interdomain involved in ARC hexamerization, and a C-terminal ATPase domain of the AAA type.</text>
</comment>
<comment type="similarity">
    <text evidence="1">Belongs to the AAA ATPase family.</text>
</comment>
<dbReference type="EMBL" id="CP001814">
    <property type="protein sequence ID" value="ACZ88626.1"/>
    <property type="molecule type" value="Genomic_DNA"/>
</dbReference>
<dbReference type="RefSeq" id="WP_012892361.1">
    <property type="nucleotide sequence ID" value="NC_013595.1"/>
</dbReference>
<dbReference type="SMR" id="D2ATX1"/>
<dbReference type="STRING" id="479432.Sros_5891"/>
<dbReference type="KEGG" id="sro:Sros_5891"/>
<dbReference type="eggNOG" id="COG1222">
    <property type="taxonomic scope" value="Bacteria"/>
</dbReference>
<dbReference type="HOGENOM" id="CLU_036054_0_0_11"/>
<dbReference type="OrthoDB" id="9809379at2"/>
<dbReference type="UniPathway" id="UPA00997"/>
<dbReference type="Proteomes" id="UP000002029">
    <property type="component" value="Chromosome"/>
</dbReference>
<dbReference type="GO" id="GO:0000502">
    <property type="term" value="C:proteasome complex"/>
    <property type="evidence" value="ECO:0007669"/>
    <property type="project" value="UniProtKB-KW"/>
</dbReference>
<dbReference type="GO" id="GO:0005524">
    <property type="term" value="F:ATP binding"/>
    <property type="evidence" value="ECO:0007669"/>
    <property type="project" value="UniProtKB-UniRule"/>
</dbReference>
<dbReference type="GO" id="GO:0016887">
    <property type="term" value="F:ATP hydrolysis activity"/>
    <property type="evidence" value="ECO:0007669"/>
    <property type="project" value="UniProtKB-UniRule"/>
</dbReference>
<dbReference type="GO" id="GO:0019941">
    <property type="term" value="P:modification-dependent protein catabolic process"/>
    <property type="evidence" value="ECO:0007669"/>
    <property type="project" value="InterPro"/>
</dbReference>
<dbReference type="GO" id="GO:0010498">
    <property type="term" value="P:proteasomal protein catabolic process"/>
    <property type="evidence" value="ECO:0007669"/>
    <property type="project" value="InterPro"/>
</dbReference>
<dbReference type="FunFam" id="3.40.50.300:FF:000155">
    <property type="entry name" value="AAA ATPase forming ring-shaped complexes"/>
    <property type="match status" value="1"/>
</dbReference>
<dbReference type="Gene3D" id="1.20.5.170">
    <property type="match status" value="1"/>
</dbReference>
<dbReference type="Gene3D" id="2.40.50.140">
    <property type="entry name" value="Nucleic acid-binding proteins"/>
    <property type="match status" value="2"/>
</dbReference>
<dbReference type="Gene3D" id="3.40.50.300">
    <property type="entry name" value="P-loop containing nucleotide triphosphate hydrolases"/>
    <property type="match status" value="1"/>
</dbReference>
<dbReference type="HAMAP" id="MF_02112">
    <property type="entry name" value="ARC_ATPase"/>
    <property type="match status" value="1"/>
</dbReference>
<dbReference type="InterPro" id="IPR003593">
    <property type="entry name" value="AAA+_ATPase"/>
</dbReference>
<dbReference type="InterPro" id="IPR050168">
    <property type="entry name" value="AAA_ATPase_domain"/>
</dbReference>
<dbReference type="InterPro" id="IPR003959">
    <property type="entry name" value="ATPase_AAA_core"/>
</dbReference>
<dbReference type="InterPro" id="IPR003960">
    <property type="entry name" value="ATPase_AAA_CS"/>
</dbReference>
<dbReference type="InterPro" id="IPR012340">
    <property type="entry name" value="NA-bd_OB-fold"/>
</dbReference>
<dbReference type="InterPro" id="IPR027417">
    <property type="entry name" value="P-loop_NTPase"/>
</dbReference>
<dbReference type="InterPro" id="IPR032501">
    <property type="entry name" value="Prot_ATP_ID_OB_2nd"/>
</dbReference>
<dbReference type="InterPro" id="IPR041626">
    <property type="entry name" value="Prot_ATP_ID_OB_N"/>
</dbReference>
<dbReference type="InterPro" id="IPR022482">
    <property type="entry name" value="Proteasome_ATPase"/>
</dbReference>
<dbReference type="NCBIfam" id="TIGR03689">
    <property type="entry name" value="pup_AAA"/>
    <property type="match status" value="1"/>
</dbReference>
<dbReference type="PANTHER" id="PTHR23077">
    <property type="entry name" value="AAA-FAMILY ATPASE"/>
    <property type="match status" value="1"/>
</dbReference>
<dbReference type="PANTHER" id="PTHR23077:SF144">
    <property type="entry name" value="PROTEASOME-ASSOCIATED ATPASE"/>
    <property type="match status" value="1"/>
</dbReference>
<dbReference type="Pfam" id="PF00004">
    <property type="entry name" value="AAA"/>
    <property type="match status" value="1"/>
</dbReference>
<dbReference type="Pfam" id="PF16450">
    <property type="entry name" value="Prot_ATP_ID_OB_C"/>
    <property type="match status" value="1"/>
</dbReference>
<dbReference type="Pfam" id="PF17758">
    <property type="entry name" value="Prot_ATP_ID_OB_N"/>
    <property type="match status" value="1"/>
</dbReference>
<dbReference type="PRINTS" id="PR00830">
    <property type="entry name" value="ENDOLAPTASE"/>
</dbReference>
<dbReference type="SMART" id="SM00382">
    <property type="entry name" value="AAA"/>
    <property type="match status" value="1"/>
</dbReference>
<dbReference type="SUPFAM" id="SSF52540">
    <property type="entry name" value="P-loop containing nucleoside triphosphate hydrolases"/>
    <property type="match status" value="1"/>
</dbReference>
<dbReference type="PROSITE" id="PS00674">
    <property type="entry name" value="AAA"/>
    <property type="match status" value="1"/>
</dbReference>
<evidence type="ECO:0000255" key="1">
    <source>
        <dbReference type="HAMAP-Rule" id="MF_02112"/>
    </source>
</evidence>
<name>ARC_STRRD</name>
<keyword id="KW-0067">ATP-binding</keyword>
<keyword id="KW-0143">Chaperone</keyword>
<keyword id="KW-0175">Coiled coil</keyword>
<keyword id="KW-0547">Nucleotide-binding</keyword>
<keyword id="KW-0647">Proteasome</keyword>
<keyword id="KW-1185">Reference proteome</keyword>
<protein>
    <recommendedName>
        <fullName evidence="1">Proteasome-associated ATPase</fullName>
    </recommendedName>
    <alternativeName>
        <fullName evidence="1">AAA ATPase forming ring-shaped complexes</fullName>
        <shortName evidence="1">ARC</shortName>
    </alternativeName>
    <alternativeName>
        <fullName evidence="1">Proteasomal ATPase</fullName>
    </alternativeName>
</protein>
<sequence>MAARDDAEARAAQREREVADLTTQVSFLQEELTALRRKLTESPRQARVLEERLHEVQANLAAVTGQNERLVATLKEARDQIVALKEEVDRLAQPPSGFGVFLESREDGTVEVFTGGRKLRVNVSPAVEVDSLKRGQEVMLNEALNVVEALGFEELGEIVMLKELLEDGRRALVISHADEERVVKLAESLVGQPIRAGDSLLLEPRSGYVYERIPKSEVEELVLEEVPDISYEEIGGLMRQIEQIRDAIELPYLHADLFREHKLRPPKGVLLYGPPGCGKTLIAKAVANSLAKQVAEKTGQSGKSFFLNIKGPELLNKYVGETERHIRLVFQRAREKASEGTPVIVFFDEMDSIFRTRGSGVSSDVENTIVPQLLSEIDGVEGLENVIVIGASNREDMIDPAILRPGRLDVKIKIERPDAEAAKDIFSKYLIEDLPLHPEDLAEHGGSRGGTISGMIQRVVERMYTESEENRFLEVTYANGDKEVLYFKDFNSGAMIQNIVDRSKKMAIKQFLESGQKGLRIQHLLAACVDEFSENEDLPNTTNPDDWARISGKKGERIVYIRTLVTGKQGTEAGRSIDTVANTGQYL</sequence>
<feature type="chain" id="PRO_0000397026" description="Proteasome-associated ATPase">
    <location>
        <begin position="1"/>
        <end position="587"/>
    </location>
</feature>
<feature type="region of interest" description="Docks into pockets in the proteasome alpha-ring" evidence="1">
    <location>
        <begin position="586"/>
        <end position="587"/>
    </location>
</feature>
<feature type="coiled-coil region" evidence="1">
    <location>
        <begin position="1"/>
        <end position="94"/>
    </location>
</feature>
<feature type="binding site" evidence="1">
    <location>
        <begin position="276"/>
        <end position="281"/>
    </location>
    <ligand>
        <name>ATP</name>
        <dbReference type="ChEBI" id="CHEBI:30616"/>
    </ligand>
</feature>